<feature type="chain" id="PRO_1000116519" description="Phospho-N-acetylmuramoyl-pentapeptide-transferase">
    <location>
        <begin position="1"/>
        <end position="355"/>
    </location>
</feature>
<feature type="transmembrane region" description="Helical" evidence="1">
    <location>
        <begin position="14"/>
        <end position="34"/>
    </location>
</feature>
<feature type="transmembrane region" description="Helical" evidence="1">
    <location>
        <begin position="40"/>
        <end position="60"/>
    </location>
</feature>
<feature type="transmembrane region" description="Helical" evidence="1">
    <location>
        <begin position="84"/>
        <end position="104"/>
    </location>
</feature>
<feature type="transmembrane region" description="Helical" evidence="1">
    <location>
        <begin position="107"/>
        <end position="127"/>
    </location>
</feature>
<feature type="transmembrane region" description="Helical" evidence="1">
    <location>
        <begin position="147"/>
        <end position="167"/>
    </location>
</feature>
<feature type="transmembrane region" description="Helical" evidence="1">
    <location>
        <begin position="176"/>
        <end position="196"/>
    </location>
</feature>
<feature type="transmembrane region" description="Helical" evidence="1">
    <location>
        <begin position="205"/>
        <end position="225"/>
    </location>
</feature>
<feature type="transmembrane region" description="Helical" evidence="1">
    <location>
        <begin position="227"/>
        <end position="247"/>
    </location>
</feature>
<feature type="transmembrane region" description="Helical" evidence="1">
    <location>
        <begin position="268"/>
        <end position="290"/>
    </location>
</feature>
<feature type="transmembrane region" description="Helical" evidence="1">
    <location>
        <begin position="334"/>
        <end position="354"/>
    </location>
</feature>
<protein>
    <recommendedName>
        <fullName evidence="1">Phospho-N-acetylmuramoyl-pentapeptide-transferase</fullName>
        <ecNumber evidence="1">2.7.8.13</ecNumber>
    </recommendedName>
    <alternativeName>
        <fullName evidence="1">UDP-MurNAc-pentapeptide phosphotransferase</fullName>
    </alternativeName>
</protein>
<accession>B0JFF7</accession>
<sequence length="355" mass="38271">MNANIFSAPIFKKPTGTHLLILLTGLLFLLVVFFQSTNSLLIPLMATTLISAGLGCQVVPMLRRLKMGQIMREDGPQAHLKKAGTPTMGGSFFVPVALIFALIWSKFTPNVVAVALLTFVYMGIGWLDDWQILRYKSNKGLSPQMKLILQITGAVLFCLWMLVNQVSTDITLWGRLVIPLGFFFWILAGFVLVAESNATNLTDGVDGLAGGTGAIAFLGLGIIIAPSHPDLAIFCTCFAGACLGFIFHNRNPAKVFMGDTGSLALGGALAAVGLIAGHLWGLFLISGLFFLESLSVIAQVIYYKATKGPDGKGKRLLKMAPFHHHLELSGWTETKIVGAFYLVNALLVVLAIWSS</sequence>
<evidence type="ECO:0000255" key="1">
    <source>
        <dbReference type="HAMAP-Rule" id="MF_00038"/>
    </source>
</evidence>
<name>MRAY_MICAN</name>
<keyword id="KW-0131">Cell cycle</keyword>
<keyword id="KW-0132">Cell division</keyword>
<keyword id="KW-0997">Cell inner membrane</keyword>
<keyword id="KW-1003">Cell membrane</keyword>
<keyword id="KW-0133">Cell shape</keyword>
<keyword id="KW-0961">Cell wall biogenesis/degradation</keyword>
<keyword id="KW-0460">Magnesium</keyword>
<keyword id="KW-0472">Membrane</keyword>
<keyword id="KW-0479">Metal-binding</keyword>
<keyword id="KW-0573">Peptidoglycan synthesis</keyword>
<keyword id="KW-0808">Transferase</keyword>
<keyword id="KW-0812">Transmembrane</keyword>
<keyword id="KW-1133">Transmembrane helix</keyword>
<dbReference type="EC" id="2.7.8.13" evidence="1"/>
<dbReference type="EMBL" id="AP009552">
    <property type="protein sequence ID" value="BAF99918.1"/>
    <property type="molecule type" value="Genomic_DNA"/>
</dbReference>
<dbReference type="RefSeq" id="WP_002797493.1">
    <property type="nucleotide sequence ID" value="NC_010296.1"/>
</dbReference>
<dbReference type="SMR" id="B0JFF7"/>
<dbReference type="STRING" id="449447.MAE_00970"/>
<dbReference type="PaxDb" id="449447-MAE_00970"/>
<dbReference type="EnsemblBacteria" id="BAF99918">
    <property type="protein sequence ID" value="BAF99918"/>
    <property type="gene ID" value="MAE_00970"/>
</dbReference>
<dbReference type="KEGG" id="mar:MAE_00970"/>
<dbReference type="eggNOG" id="COG0472">
    <property type="taxonomic scope" value="Bacteria"/>
</dbReference>
<dbReference type="HOGENOM" id="CLU_023982_0_2_3"/>
<dbReference type="BioCyc" id="MAER449447:MAE_RS00415-MONOMER"/>
<dbReference type="UniPathway" id="UPA00219"/>
<dbReference type="Proteomes" id="UP000001510">
    <property type="component" value="Chromosome"/>
</dbReference>
<dbReference type="GO" id="GO:0005886">
    <property type="term" value="C:plasma membrane"/>
    <property type="evidence" value="ECO:0007669"/>
    <property type="project" value="UniProtKB-SubCell"/>
</dbReference>
<dbReference type="GO" id="GO:0046872">
    <property type="term" value="F:metal ion binding"/>
    <property type="evidence" value="ECO:0007669"/>
    <property type="project" value="UniProtKB-KW"/>
</dbReference>
<dbReference type="GO" id="GO:0008963">
    <property type="term" value="F:phospho-N-acetylmuramoyl-pentapeptide-transferase activity"/>
    <property type="evidence" value="ECO:0007669"/>
    <property type="project" value="UniProtKB-UniRule"/>
</dbReference>
<dbReference type="GO" id="GO:0051992">
    <property type="term" value="F:UDP-N-acetylmuramoyl-L-alanyl-D-glutamyl-meso-2,6-diaminopimelyl-D-alanyl-D-alanine:undecaprenyl-phosphate transferase activity"/>
    <property type="evidence" value="ECO:0007669"/>
    <property type="project" value="RHEA"/>
</dbReference>
<dbReference type="GO" id="GO:0051301">
    <property type="term" value="P:cell division"/>
    <property type="evidence" value="ECO:0007669"/>
    <property type="project" value="UniProtKB-KW"/>
</dbReference>
<dbReference type="GO" id="GO:0071555">
    <property type="term" value="P:cell wall organization"/>
    <property type="evidence" value="ECO:0007669"/>
    <property type="project" value="UniProtKB-KW"/>
</dbReference>
<dbReference type="GO" id="GO:0009252">
    <property type="term" value="P:peptidoglycan biosynthetic process"/>
    <property type="evidence" value="ECO:0007669"/>
    <property type="project" value="UniProtKB-UniRule"/>
</dbReference>
<dbReference type="GO" id="GO:0008360">
    <property type="term" value="P:regulation of cell shape"/>
    <property type="evidence" value="ECO:0007669"/>
    <property type="project" value="UniProtKB-KW"/>
</dbReference>
<dbReference type="CDD" id="cd06852">
    <property type="entry name" value="GT_MraY"/>
    <property type="match status" value="1"/>
</dbReference>
<dbReference type="HAMAP" id="MF_00038">
    <property type="entry name" value="MraY"/>
    <property type="match status" value="1"/>
</dbReference>
<dbReference type="InterPro" id="IPR000715">
    <property type="entry name" value="Glycosyl_transferase_4"/>
</dbReference>
<dbReference type="InterPro" id="IPR003524">
    <property type="entry name" value="PNAcMuramoyl-5peptid_Trfase"/>
</dbReference>
<dbReference type="InterPro" id="IPR018480">
    <property type="entry name" value="PNAcMuramoyl-5peptid_Trfase_CS"/>
</dbReference>
<dbReference type="NCBIfam" id="TIGR00445">
    <property type="entry name" value="mraY"/>
    <property type="match status" value="1"/>
</dbReference>
<dbReference type="PANTHER" id="PTHR22926">
    <property type="entry name" value="PHOSPHO-N-ACETYLMURAMOYL-PENTAPEPTIDE-TRANSFERASE"/>
    <property type="match status" value="1"/>
</dbReference>
<dbReference type="PANTHER" id="PTHR22926:SF5">
    <property type="entry name" value="PHOSPHO-N-ACETYLMURAMOYL-PENTAPEPTIDE-TRANSFERASE HOMOLOG"/>
    <property type="match status" value="1"/>
</dbReference>
<dbReference type="Pfam" id="PF00953">
    <property type="entry name" value="Glycos_transf_4"/>
    <property type="match status" value="1"/>
</dbReference>
<dbReference type="Pfam" id="PF10555">
    <property type="entry name" value="MraY_sig1"/>
    <property type="match status" value="1"/>
</dbReference>
<dbReference type="PROSITE" id="PS01347">
    <property type="entry name" value="MRAY_1"/>
    <property type="match status" value="1"/>
</dbReference>
<dbReference type="PROSITE" id="PS01348">
    <property type="entry name" value="MRAY_2"/>
    <property type="match status" value="1"/>
</dbReference>
<gene>
    <name evidence="1" type="primary">mraY</name>
    <name type="ordered locus">MAE_00970</name>
</gene>
<reference key="1">
    <citation type="journal article" date="2007" name="DNA Res.">
        <title>Complete genomic structure of the bloom-forming toxic cyanobacterium Microcystis aeruginosa NIES-843.</title>
        <authorList>
            <person name="Kaneko T."/>
            <person name="Nakajima N."/>
            <person name="Okamoto S."/>
            <person name="Suzuki I."/>
            <person name="Tanabe Y."/>
            <person name="Tamaoki M."/>
            <person name="Nakamura Y."/>
            <person name="Kasai F."/>
            <person name="Watanabe A."/>
            <person name="Kawashima K."/>
            <person name="Kishida Y."/>
            <person name="Ono A."/>
            <person name="Shimizu Y."/>
            <person name="Takahashi C."/>
            <person name="Minami C."/>
            <person name="Fujishiro T."/>
            <person name="Kohara M."/>
            <person name="Katoh M."/>
            <person name="Nakazaki N."/>
            <person name="Nakayama S."/>
            <person name="Yamada M."/>
            <person name="Tabata S."/>
            <person name="Watanabe M.M."/>
        </authorList>
    </citation>
    <scope>NUCLEOTIDE SEQUENCE [LARGE SCALE GENOMIC DNA]</scope>
    <source>
        <strain>NIES-843 / IAM M-247</strain>
    </source>
</reference>
<proteinExistence type="inferred from homology"/>
<organism>
    <name type="scientific">Microcystis aeruginosa (strain NIES-843 / IAM M-2473)</name>
    <dbReference type="NCBI Taxonomy" id="449447"/>
    <lineage>
        <taxon>Bacteria</taxon>
        <taxon>Bacillati</taxon>
        <taxon>Cyanobacteriota</taxon>
        <taxon>Cyanophyceae</taxon>
        <taxon>Oscillatoriophycideae</taxon>
        <taxon>Chroococcales</taxon>
        <taxon>Microcystaceae</taxon>
        <taxon>Microcystis</taxon>
    </lineage>
</organism>
<comment type="function">
    <text evidence="1">Catalyzes the initial step of the lipid cycle reactions in the biosynthesis of the cell wall peptidoglycan: transfers peptidoglycan precursor phospho-MurNAc-pentapeptide from UDP-MurNAc-pentapeptide onto the lipid carrier undecaprenyl phosphate, yielding undecaprenyl-pyrophosphoryl-MurNAc-pentapeptide, known as lipid I.</text>
</comment>
<comment type="catalytic activity">
    <reaction evidence="1">
        <text>UDP-N-acetyl-alpha-D-muramoyl-L-alanyl-gamma-D-glutamyl-meso-2,6-diaminopimeloyl-D-alanyl-D-alanine + di-trans,octa-cis-undecaprenyl phosphate = di-trans,octa-cis-undecaprenyl diphospho-N-acetyl-alpha-D-muramoyl-L-alanyl-D-glutamyl-meso-2,6-diaminopimeloyl-D-alanyl-D-alanine + UMP</text>
        <dbReference type="Rhea" id="RHEA:28386"/>
        <dbReference type="ChEBI" id="CHEBI:57865"/>
        <dbReference type="ChEBI" id="CHEBI:60392"/>
        <dbReference type="ChEBI" id="CHEBI:61386"/>
        <dbReference type="ChEBI" id="CHEBI:61387"/>
        <dbReference type="EC" id="2.7.8.13"/>
    </reaction>
</comment>
<comment type="cofactor">
    <cofactor evidence="1">
        <name>Mg(2+)</name>
        <dbReference type="ChEBI" id="CHEBI:18420"/>
    </cofactor>
</comment>
<comment type="pathway">
    <text evidence="1">Cell wall biogenesis; peptidoglycan biosynthesis.</text>
</comment>
<comment type="subcellular location">
    <subcellularLocation>
        <location evidence="1">Cell inner membrane</location>
        <topology evidence="1">Multi-pass membrane protein</topology>
    </subcellularLocation>
</comment>
<comment type="similarity">
    <text evidence="1">Belongs to the glycosyltransferase 4 family. MraY subfamily.</text>
</comment>